<geneLocation type="chloroplast"/>
<sequence>MAKPLPRIGSRKNRHMGSRKNVRRIPKGVIHVQASFNNTIVTVTDVRGRVISWSSAGTCGFKGTKRGTPFAAQTAAGNAIRTVVDQGMQRAEVMIKGPGLGRDAALRAIRRSGILLSFIRDVTPMPHNGCRPPKKRRV</sequence>
<feature type="chain" id="PRO_0000276651" description="Small ribosomal subunit protein uS11c">
    <location>
        <begin position="1"/>
        <end position="138"/>
    </location>
</feature>
<gene>
    <name evidence="1" type="primary">rps11</name>
    <name type="ordered locus">MoinCp054</name>
</gene>
<organism>
    <name type="scientific">Morus indica</name>
    <name type="common">Mulberry</name>
    <dbReference type="NCBI Taxonomy" id="248361"/>
    <lineage>
        <taxon>Eukaryota</taxon>
        <taxon>Viridiplantae</taxon>
        <taxon>Streptophyta</taxon>
        <taxon>Embryophyta</taxon>
        <taxon>Tracheophyta</taxon>
        <taxon>Spermatophyta</taxon>
        <taxon>Magnoliopsida</taxon>
        <taxon>eudicotyledons</taxon>
        <taxon>Gunneridae</taxon>
        <taxon>Pentapetalae</taxon>
        <taxon>rosids</taxon>
        <taxon>fabids</taxon>
        <taxon>Rosales</taxon>
        <taxon>Moraceae</taxon>
        <taxon>Moreae</taxon>
        <taxon>Morus</taxon>
    </lineage>
</organism>
<dbReference type="EMBL" id="DQ226511">
    <property type="protein sequence ID" value="ABB20990.1"/>
    <property type="molecule type" value="Genomic_DNA"/>
</dbReference>
<dbReference type="RefSeq" id="YP_762294.1">
    <property type="nucleotide sequence ID" value="NC_008359.1"/>
</dbReference>
<dbReference type="SMR" id="Q09WY4"/>
<dbReference type="GeneID" id="4290630"/>
<dbReference type="GO" id="GO:0009507">
    <property type="term" value="C:chloroplast"/>
    <property type="evidence" value="ECO:0007669"/>
    <property type="project" value="UniProtKB-SubCell"/>
</dbReference>
<dbReference type="GO" id="GO:1990904">
    <property type="term" value="C:ribonucleoprotein complex"/>
    <property type="evidence" value="ECO:0007669"/>
    <property type="project" value="UniProtKB-KW"/>
</dbReference>
<dbReference type="GO" id="GO:0005840">
    <property type="term" value="C:ribosome"/>
    <property type="evidence" value="ECO:0007669"/>
    <property type="project" value="UniProtKB-KW"/>
</dbReference>
<dbReference type="GO" id="GO:0019843">
    <property type="term" value="F:rRNA binding"/>
    <property type="evidence" value="ECO:0007669"/>
    <property type="project" value="UniProtKB-UniRule"/>
</dbReference>
<dbReference type="GO" id="GO:0003735">
    <property type="term" value="F:structural constituent of ribosome"/>
    <property type="evidence" value="ECO:0007669"/>
    <property type="project" value="InterPro"/>
</dbReference>
<dbReference type="GO" id="GO:0006412">
    <property type="term" value="P:translation"/>
    <property type="evidence" value="ECO:0007669"/>
    <property type="project" value="UniProtKB-UniRule"/>
</dbReference>
<dbReference type="FunFam" id="3.30.420.80:FF:000003">
    <property type="entry name" value="30S ribosomal protein S11, chloroplastic"/>
    <property type="match status" value="1"/>
</dbReference>
<dbReference type="Gene3D" id="3.30.420.80">
    <property type="entry name" value="Ribosomal protein S11"/>
    <property type="match status" value="1"/>
</dbReference>
<dbReference type="HAMAP" id="MF_01310">
    <property type="entry name" value="Ribosomal_uS11"/>
    <property type="match status" value="1"/>
</dbReference>
<dbReference type="InterPro" id="IPR001971">
    <property type="entry name" value="Ribosomal_uS11"/>
</dbReference>
<dbReference type="InterPro" id="IPR019981">
    <property type="entry name" value="Ribosomal_uS11_bac-type"/>
</dbReference>
<dbReference type="InterPro" id="IPR018102">
    <property type="entry name" value="Ribosomal_uS11_CS"/>
</dbReference>
<dbReference type="InterPro" id="IPR036967">
    <property type="entry name" value="Ribosomal_uS11_sf"/>
</dbReference>
<dbReference type="NCBIfam" id="NF003698">
    <property type="entry name" value="PRK05309.1"/>
    <property type="match status" value="1"/>
</dbReference>
<dbReference type="NCBIfam" id="TIGR03632">
    <property type="entry name" value="uS11_bact"/>
    <property type="match status" value="1"/>
</dbReference>
<dbReference type="PANTHER" id="PTHR11759">
    <property type="entry name" value="40S RIBOSOMAL PROTEIN S14/30S RIBOSOMAL PROTEIN S11"/>
    <property type="match status" value="1"/>
</dbReference>
<dbReference type="Pfam" id="PF00411">
    <property type="entry name" value="Ribosomal_S11"/>
    <property type="match status" value="1"/>
</dbReference>
<dbReference type="PIRSF" id="PIRSF002131">
    <property type="entry name" value="Ribosomal_S11"/>
    <property type="match status" value="1"/>
</dbReference>
<dbReference type="SUPFAM" id="SSF53137">
    <property type="entry name" value="Translational machinery components"/>
    <property type="match status" value="1"/>
</dbReference>
<dbReference type="PROSITE" id="PS00054">
    <property type="entry name" value="RIBOSOMAL_S11"/>
    <property type="match status" value="1"/>
</dbReference>
<evidence type="ECO:0000255" key="1">
    <source>
        <dbReference type="HAMAP-Rule" id="MF_01310"/>
    </source>
</evidence>
<evidence type="ECO:0000305" key="2"/>
<keyword id="KW-0150">Chloroplast</keyword>
<keyword id="KW-0934">Plastid</keyword>
<keyword id="KW-0687">Ribonucleoprotein</keyword>
<keyword id="KW-0689">Ribosomal protein</keyword>
<keyword id="KW-0694">RNA-binding</keyword>
<keyword id="KW-0699">rRNA-binding</keyword>
<name>RR11_MORIN</name>
<reference key="1">
    <citation type="submission" date="2005-09" db="EMBL/GenBank/DDBJ databases">
        <title>The chloroplast genome of mulberry: structural features and comparative analysis.</title>
        <authorList>
            <person name="Ravi V."/>
            <person name="Khurana J.P."/>
            <person name="Tyagi A.K."/>
            <person name="Khurana P."/>
        </authorList>
    </citation>
    <scope>NUCLEOTIDE SEQUENCE [LARGE SCALE GENOMIC DNA]</scope>
    <source>
        <strain>cv. K2</strain>
    </source>
</reference>
<accession>Q09WY4</accession>
<comment type="subunit">
    <text evidence="1">Part of the 30S ribosomal subunit.</text>
</comment>
<comment type="subcellular location">
    <subcellularLocation>
        <location>Plastid</location>
        <location>Chloroplast</location>
    </subcellularLocation>
</comment>
<comment type="similarity">
    <text evidence="1">Belongs to the universal ribosomal protein uS11 family.</text>
</comment>
<protein>
    <recommendedName>
        <fullName evidence="1">Small ribosomal subunit protein uS11c</fullName>
    </recommendedName>
    <alternativeName>
        <fullName evidence="2">30S ribosomal protein S11, chloroplastic</fullName>
    </alternativeName>
</protein>
<proteinExistence type="inferred from homology"/>